<reference key="1">
    <citation type="journal article" date="1999" name="Genomics">
        <title>Cloning and characterization of RNF6, a novel RING finger gene mapping to 13q12.</title>
        <authorList>
            <person name="Macdonald D.H.C."/>
            <person name="Lahiri D."/>
            <person name="Sampath A."/>
            <person name="Chase A."/>
            <person name="Sohal J."/>
            <person name="Cross N.C.P."/>
        </authorList>
    </citation>
    <scope>NUCLEOTIDE SEQUENCE [MRNA] (ISOFORM 1)</scope>
    <source>
        <tissue>Leukocyte</tissue>
    </source>
</reference>
<reference key="2">
    <citation type="submission" date="2000-08" db="EMBL/GenBank/DDBJ databases">
        <title>Alternative splice variant of the RING-H2 protein RNF6 lacks the RING-H2 domain.</title>
        <authorList>
            <person name="Alao J.P."/>
            <person name="Grand F.H."/>
            <person name="MacDonald D.H.C."/>
        </authorList>
    </citation>
    <scope>NUCLEOTIDE SEQUENCE [MRNA] (ISOFORM 3)</scope>
    <scope>ALTERNATIVE SPLICING</scope>
</reference>
<reference key="3">
    <citation type="journal article" date="2008" name="Sci. China, Ser. C, Life Sci.">
        <title>Cloning and identification of a novel RNF6 transcriptional splice variant Spg2 in human development.</title>
        <authorList>
            <person name="Zhu L."/>
            <person name="Tong G."/>
            <person name="Chen J."/>
            <person name="Wang Y."/>
            <person name="Wang S."/>
            <person name="Zhao M."/>
            <person name="Li J."/>
            <person name="Ma J."/>
        </authorList>
    </citation>
    <scope>NUCLEOTIDE SEQUENCE [MRNA] (ISOFORM 1)</scope>
    <scope>DEVELOPMENTAL STAGE</scope>
    <scope>TISSUE SPECIFICITY</scope>
    <source>
        <tissue>Testis</tissue>
    </source>
</reference>
<reference key="4">
    <citation type="journal article" date="2004" name="Nat. Genet.">
        <title>Complete sequencing and characterization of 21,243 full-length human cDNAs.</title>
        <authorList>
            <person name="Ota T."/>
            <person name="Suzuki Y."/>
            <person name="Nishikawa T."/>
            <person name="Otsuki T."/>
            <person name="Sugiyama T."/>
            <person name="Irie R."/>
            <person name="Wakamatsu A."/>
            <person name="Hayashi K."/>
            <person name="Sato H."/>
            <person name="Nagai K."/>
            <person name="Kimura K."/>
            <person name="Makita H."/>
            <person name="Sekine M."/>
            <person name="Obayashi M."/>
            <person name="Nishi T."/>
            <person name="Shibahara T."/>
            <person name="Tanaka T."/>
            <person name="Ishii S."/>
            <person name="Yamamoto J."/>
            <person name="Saito K."/>
            <person name="Kawai Y."/>
            <person name="Isono Y."/>
            <person name="Nakamura Y."/>
            <person name="Nagahari K."/>
            <person name="Murakami K."/>
            <person name="Yasuda T."/>
            <person name="Iwayanagi T."/>
            <person name="Wagatsuma M."/>
            <person name="Shiratori A."/>
            <person name="Sudo H."/>
            <person name="Hosoiri T."/>
            <person name="Kaku Y."/>
            <person name="Kodaira H."/>
            <person name="Kondo H."/>
            <person name="Sugawara M."/>
            <person name="Takahashi M."/>
            <person name="Kanda K."/>
            <person name="Yokoi T."/>
            <person name="Furuya T."/>
            <person name="Kikkawa E."/>
            <person name="Omura Y."/>
            <person name="Abe K."/>
            <person name="Kamihara K."/>
            <person name="Katsuta N."/>
            <person name="Sato K."/>
            <person name="Tanikawa M."/>
            <person name="Yamazaki M."/>
            <person name="Ninomiya K."/>
            <person name="Ishibashi T."/>
            <person name="Yamashita H."/>
            <person name="Murakawa K."/>
            <person name="Fujimori K."/>
            <person name="Tanai H."/>
            <person name="Kimata M."/>
            <person name="Watanabe M."/>
            <person name="Hiraoka S."/>
            <person name="Chiba Y."/>
            <person name="Ishida S."/>
            <person name="Ono Y."/>
            <person name="Takiguchi S."/>
            <person name="Watanabe S."/>
            <person name="Yosida M."/>
            <person name="Hotuta T."/>
            <person name="Kusano J."/>
            <person name="Kanehori K."/>
            <person name="Takahashi-Fujii A."/>
            <person name="Hara H."/>
            <person name="Tanase T.-O."/>
            <person name="Nomura Y."/>
            <person name="Togiya S."/>
            <person name="Komai F."/>
            <person name="Hara R."/>
            <person name="Takeuchi K."/>
            <person name="Arita M."/>
            <person name="Imose N."/>
            <person name="Musashino K."/>
            <person name="Yuuki H."/>
            <person name="Oshima A."/>
            <person name="Sasaki N."/>
            <person name="Aotsuka S."/>
            <person name="Yoshikawa Y."/>
            <person name="Matsunawa H."/>
            <person name="Ichihara T."/>
            <person name="Shiohata N."/>
            <person name="Sano S."/>
            <person name="Moriya S."/>
            <person name="Momiyama H."/>
            <person name="Satoh N."/>
            <person name="Takami S."/>
            <person name="Terashima Y."/>
            <person name="Suzuki O."/>
            <person name="Nakagawa S."/>
            <person name="Senoh A."/>
            <person name="Mizoguchi H."/>
            <person name="Goto Y."/>
            <person name="Shimizu F."/>
            <person name="Wakebe H."/>
            <person name="Hishigaki H."/>
            <person name="Watanabe T."/>
            <person name="Sugiyama A."/>
            <person name="Takemoto M."/>
            <person name="Kawakami B."/>
            <person name="Yamazaki M."/>
            <person name="Watanabe K."/>
            <person name="Kumagai A."/>
            <person name="Itakura S."/>
            <person name="Fukuzumi Y."/>
            <person name="Fujimori Y."/>
            <person name="Komiyama M."/>
            <person name="Tashiro H."/>
            <person name="Tanigami A."/>
            <person name="Fujiwara T."/>
            <person name="Ono T."/>
            <person name="Yamada K."/>
            <person name="Fujii Y."/>
            <person name="Ozaki K."/>
            <person name="Hirao M."/>
            <person name="Ohmori Y."/>
            <person name="Kawabata A."/>
            <person name="Hikiji T."/>
            <person name="Kobatake N."/>
            <person name="Inagaki H."/>
            <person name="Ikema Y."/>
            <person name="Okamoto S."/>
            <person name="Okitani R."/>
            <person name="Kawakami T."/>
            <person name="Noguchi S."/>
            <person name="Itoh T."/>
            <person name="Shigeta K."/>
            <person name="Senba T."/>
            <person name="Matsumura K."/>
            <person name="Nakajima Y."/>
            <person name="Mizuno T."/>
            <person name="Morinaga M."/>
            <person name="Sasaki M."/>
            <person name="Togashi T."/>
            <person name="Oyama M."/>
            <person name="Hata H."/>
            <person name="Watanabe M."/>
            <person name="Komatsu T."/>
            <person name="Mizushima-Sugano J."/>
            <person name="Satoh T."/>
            <person name="Shirai Y."/>
            <person name="Takahashi Y."/>
            <person name="Nakagawa K."/>
            <person name="Okumura K."/>
            <person name="Nagase T."/>
            <person name="Nomura N."/>
            <person name="Kikuchi H."/>
            <person name="Masuho Y."/>
            <person name="Yamashita R."/>
            <person name="Nakai K."/>
            <person name="Yada T."/>
            <person name="Nakamura Y."/>
            <person name="Ohara O."/>
            <person name="Isogai T."/>
            <person name="Sugano S."/>
        </authorList>
    </citation>
    <scope>NUCLEOTIDE SEQUENCE [LARGE SCALE MRNA] (ISOFORMS 1 AND 2)</scope>
    <source>
        <tissue>Brain</tissue>
    </source>
</reference>
<reference key="5">
    <citation type="journal article" date="2004" name="Nature">
        <title>The DNA sequence and analysis of human chromosome 13.</title>
        <authorList>
            <person name="Dunham A."/>
            <person name="Matthews L.H."/>
            <person name="Burton J."/>
            <person name="Ashurst J.L."/>
            <person name="Howe K.L."/>
            <person name="Ashcroft K.J."/>
            <person name="Beare D.M."/>
            <person name="Burford D.C."/>
            <person name="Hunt S.E."/>
            <person name="Griffiths-Jones S."/>
            <person name="Jones M.C."/>
            <person name="Keenan S.J."/>
            <person name="Oliver K."/>
            <person name="Scott C.E."/>
            <person name="Ainscough R."/>
            <person name="Almeida J.P."/>
            <person name="Ambrose K.D."/>
            <person name="Andrews D.T."/>
            <person name="Ashwell R.I.S."/>
            <person name="Babbage A.K."/>
            <person name="Bagguley C.L."/>
            <person name="Bailey J."/>
            <person name="Bannerjee R."/>
            <person name="Barlow K.F."/>
            <person name="Bates K."/>
            <person name="Beasley H."/>
            <person name="Bird C.P."/>
            <person name="Bray-Allen S."/>
            <person name="Brown A.J."/>
            <person name="Brown J.Y."/>
            <person name="Burrill W."/>
            <person name="Carder C."/>
            <person name="Carter N.P."/>
            <person name="Chapman J.C."/>
            <person name="Clamp M.E."/>
            <person name="Clark S.Y."/>
            <person name="Clarke G."/>
            <person name="Clee C.M."/>
            <person name="Clegg S.C."/>
            <person name="Cobley V."/>
            <person name="Collins J.E."/>
            <person name="Corby N."/>
            <person name="Coville G.J."/>
            <person name="Deloukas P."/>
            <person name="Dhami P."/>
            <person name="Dunham I."/>
            <person name="Dunn M."/>
            <person name="Earthrowl M.E."/>
            <person name="Ellington A.G."/>
            <person name="Faulkner L."/>
            <person name="Frankish A.G."/>
            <person name="Frankland J."/>
            <person name="French L."/>
            <person name="Garner P."/>
            <person name="Garnett J."/>
            <person name="Gilbert J.G.R."/>
            <person name="Gilson C.J."/>
            <person name="Ghori J."/>
            <person name="Grafham D.V."/>
            <person name="Gribble S.M."/>
            <person name="Griffiths C."/>
            <person name="Hall R.E."/>
            <person name="Hammond S."/>
            <person name="Harley J.L."/>
            <person name="Hart E.A."/>
            <person name="Heath P.D."/>
            <person name="Howden P.J."/>
            <person name="Huckle E.J."/>
            <person name="Hunt P.J."/>
            <person name="Hunt A.R."/>
            <person name="Johnson C."/>
            <person name="Johnson D."/>
            <person name="Kay M."/>
            <person name="Kimberley A.M."/>
            <person name="King A."/>
            <person name="Laird G.K."/>
            <person name="Langford C.J."/>
            <person name="Lawlor S."/>
            <person name="Leongamornlert D.A."/>
            <person name="Lloyd D.M."/>
            <person name="Lloyd C."/>
            <person name="Loveland J.E."/>
            <person name="Lovell J."/>
            <person name="Martin S."/>
            <person name="Mashreghi-Mohammadi M."/>
            <person name="McLaren S.J."/>
            <person name="McMurray A."/>
            <person name="Milne S."/>
            <person name="Moore M.J.F."/>
            <person name="Nickerson T."/>
            <person name="Palmer S.A."/>
            <person name="Pearce A.V."/>
            <person name="Peck A.I."/>
            <person name="Pelan S."/>
            <person name="Phillimore B."/>
            <person name="Porter K.M."/>
            <person name="Rice C.M."/>
            <person name="Searle S."/>
            <person name="Sehra H.K."/>
            <person name="Shownkeen R."/>
            <person name="Skuce C.D."/>
            <person name="Smith M."/>
            <person name="Steward C.A."/>
            <person name="Sycamore N."/>
            <person name="Tester J."/>
            <person name="Thomas D.W."/>
            <person name="Tracey A."/>
            <person name="Tromans A."/>
            <person name="Tubby B."/>
            <person name="Wall M."/>
            <person name="Wallis J.M."/>
            <person name="West A.P."/>
            <person name="Whitehead S.L."/>
            <person name="Willey D.L."/>
            <person name="Wilming L."/>
            <person name="Wray P.W."/>
            <person name="Wright M.W."/>
            <person name="Young L."/>
            <person name="Coulson A."/>
            <person name="Durbin R.M."/>
            <person name="Hubbard T."/>
            <person name="Sulston J.E."/>
            <person name="Beck S."/>
            <person name="Bentley D.R."/>
            <person name="Rogers J."/>
            <person name="Ross M.T."/>
        </authorList>
    </citation>
    <scope>NUCLEOTIDE SEQUENCE [LARGE SCALE GENOMIC DNA]</scope>
</reference>
<reference key="6">
    <citation type="submission" date="2005-07" db="EMBL/GenBank/DDBJ databases">
        <authorList>
            <person name="Mural R.J."/>
            <person name="Istrail S."/>
            <person name="Sutton G."/>
            <person name="Florea L."/>
            <person name="Halpern A.L."/>
            <person name="Mobarry C.M."/>
            <person name="Lippert R."/>
            <person name="Walenz B."/>
            <person name="Shatkay H."/>
            <person name="Dew I."/>
            <person name="Miller J.R."/>
            <person name="Flanigan M.J."/>
            <person name="Edwards N.J."/>
            <person name="Bolanos R."/>
            <person name="Fasulo D."/>
            <person name="Halldorsson B.V."/>
            <person name="Hannenhalli S."/>
            <person name="Turner R."/>
            <person name="Yooseph S."/>
            <person name="Lu F."/>
            <person name="Nusskern D.R."/>
            <person name="Shue B.C."/>
            <person name="Zheng X.H."/>
            <person name="Zhong F."/>
            <person name="Delcher A.L."/>
            <person name="Huson D.H."/>
            <person name="Kravitz S.A."/>
            <person name="Mouchard L."/>
            <person name="Reinert K."/>
            <person name="Remington K.A."/>
            <person name="Clark A.G."/>
            <person name="Waterman M.S."/>
            <person name="Eichler E.E."/>
            <person name="Adams M.D."/>
            <person name="Hunkapiller M.W."/>
            <person name="Myers E.W."/>
            <person name="Venter J.C."/>
        </authorList>
    </citation>
    <scope>NUCLEOTIDE SEQUENCE [LARGE SCALE GENOMIC DNA]</scope>
</reference>
<reference key="7">
    <citation type="journal article" date="2004" name="Genome Res.">
        <title>The status, quality, and expansion of the NIH full-length cDNA project: the Mammalian Gene Collection (MGC).</title>
        <authorList>
            <consortium name="The MGC Project Team"/>
        </authorList>
    </citation>
    <scope>NUCLEOTIDE SEQUENCE [LARGE SCALE MRNA] (ISOFORM 1)</scope>
    <source>
        <tissue>Testis</tissue>
    </source>
</reference>
<reference key="8">
    <citation type="journal article" date="2007" name="BMC Genomics">
        <title>The full-ORF clone resource of the German cDNA consortium.</title>
        <authorList>
            <person name="Bechtel S."/>
            <person name="Rosenfelder H."/>
            <person name="Duda A."/>
            <person name="Schmidt C.P."/>
            <person name="Ernst U."/>
            <person name="Wellenreuther R."/>
            <person name="Mehrle A."/>
            <person name="Schuster C."/>
            <person name="Bahr A."/>
            <person name="Bloecker H."/>
            <person name="Heubner D."/>
            <person name="Hoerlein A."/>
            <person name="Michel G."/>
            <person name="Wedler H."/>
            <person name="Koehrer K."/>
            <person name="Ottenwaelder B."/>
            <person name="Poustka A."/>
            <person name="Wiemann S."/>
            <person name="Schupp I."/>
        </authorList>
    </citation>
    <scope>NUCLEOTIDE SEQUENCE [LARGE SCALE MRNA] OF 320-685 (ISOFORM 1)</scope>
    <source>
        <tissue>Testis</tissue>
    </source>
</reference>
<reference key="9">
    <citation type="journal article" date="2009" name="Cancer Cell">
        <title>Regulation of androgen receptor transcriptional activity and specificity by RNF6-induced ubiquitination.</title>
        <authorList>
            <person name="Xu K."/>
            <person name="Shimelis H."/>
            <person name="Linn D.E."/>
            <person name="Jiang R."/>
            <person name="Yang X."/>
            <person name="Sun F."/>
            <person name="Guo Z."/>
            <person name="Chen H."/>
            <person name="Li W."/>
            <person name="Chen H."/>
            <person name="Kong X."/>
            <person name="Melamed J."/>
            <person name="Fang S."/>
            <person name="Xiao Z."/>
            <person name="Veenstra T.D."/>
            <person name="Qiu Y."/>
        </authorList>
    </citation>
    <scope>FUNCTION</scope>
    <scope>CATALYTIC ACTIVITY</scope>
    <scope>PATHWAY</scope>
    <scope>SUBCELLULAR LOCATION</scope>
    <scope>TISSUE SPECIFICITY</scope>
</reference>
<reference key="10">
    <citation type="journal article" date="2002" name="Cancer Res.">
        <title>Identification of somatic mutations of the RNF6 gene in human esophageal squamous cell carcinoma.</title>
        <authorList>
            <person name="Lo H.S."/>
            <person name="Hu N."/>
            <person name="Gere S."/>
            <person name="Lu N."/>
            <person name="Su H."/>
            <person name="Goldstein A.M."/>
            <person name="Taylor P.R."/>
            <person name="Lee M.P."/>
        </authorList>
    </citation>
    <scope>INVOLVEMENT IN ESCR</scope>
    <scope>VARIANTS SER-48; LYS-102; THR-164; THR-242; ASP-244; GLN-572 AND ASN-623</scope>
</reference>
<protein>
    <recommendedName>
        <fullName evidence="11">E3 ubiquitin-protein ligase RNF6</fullName>
        <ecNumber evidence="6">2.3.2.27</ecNumber>
    </recommendedName>
</protein>
<comment type="function">
    <text evidence="1 6">E3 ubiquitin-protein ligase mediating 'Lys-48'-linked polyubiquitination of LIMK1 and its subsequent targeting to the proteasome for degradation (By similarity). Negatively regulates axonal outgrowth through regulation of the LIMK1 turnover (By similarity). Mediates 'Lys-6' and 'Lys-27'-linked polyubiquitination of AR/androgen receptor thereby modulating its transcriptional activity (PubMed:19345326). May also bind DNA and function as a transcriptional regulator (By similarity). Mediates polyubiquitination of QKI in macrophages, leading to its degradation (By similarity).</text>
</comment>
<comment type="catalytic activity">
    <reaction evidence="6">
        <text>S-ubiquitinyl-[E2 ubiquitin-conjugating enzyme]-L-cysteine + [acceptor protein]-L-lysine = [E2 ubiquitin-conjugating enzyme]-L-cysteine + N(6)-ubiquitinyl-[acceptor protein]-L-lysine.</text>
        <dbReference type="EC" id="2.3.2.27"/>
    </reaction>
</comment>
<comment type="pathway">
    <text evidence="6">Protein modification; protein ubiquitination.</text>
</comment>
<comment type="interaction">
    <interactant intactId="EBI-2341483">
        <id>Q9Y252</id>
    </interactant>
    <interactant intactId="EBI-608057">
        <id>P10275</id>
        <label>AR</label>
    </interactant>
    <organismsDiffer>false</organismsDiffer>
    <experiments>10</experiments>
</comment>
<comment type="subcellular location">
    <subcellularLocation>
        <location evidence="6">Nucleus</location>
    </subcellularLocation>
    <subcellularLocation>
        <location evidence="6">Cytoplasm</location>
    </subcellularLocation>
    <subcellularLocation>
        <location evidence="1">Cell projection</location>
        <location evidence="1">Axon</location>
    </subcellularLocation>
    <subcellularLocation>
        <location evidence="1">Nucleus</location>
        <location evidence="1">PML body</location>
    </subcellularLocation>
    <text evidence="1">Localizes to the PML nuclear bodies in Sertoli cells.</text>
</comment>
<comment type="alternative products">
    <event type="alternative splicing"/>
    <isoform>
        <id>Q9Y252-1</id>
        <name>1</name>
        <sequence type="displayed"/>
    </isoform>
    <isoform>
        <id>Q9Y252-2</id>
        <name>2</name>
        <sequence type="described" ref="VSP_055424 VSP_055425"/>
    </isoform>
    <isoform>
        <id>Q9Y252-3</id>
        <name>3</name>
        <sequence type="described" ref="VSP_055426 VSP_055427"/>
    </isoform>
</comment>
<comment type="tissue specificity">
    <text evidence="5 6">Weakly expressed in peripheral blood, spleen, prostate, testis and ovary (PubMed:19345326). According to a report, it is preferentially expressed in testis and ovary and hardly detected in other tissues (PubMed:18368307).</text>
</comment>
<comment type="developmental stage">
    <text evidence="5">Expressed in embryo and adult testis.</text>
</comment>
<comment type="disease" evidence="4">
    <disease id="DI-01537">
        <name>Esophageal cancer</name>
        <acronym>ESCR</acronym>
        <description>A malignancy of the esophagus. The most common types are esophageal squamous cell carcinoma and adenocarcinoma. Cancer of the esophagus remains a devastating disease because it is usually not detected until it has progressed to an advanced incurable stage.</description>
        <dbReference type="MIM" id="133239"/>
    </disease>
    <text>The disease may be caused by variants affecting the gene represented in this entry.</text>
</comment>
<comment type="similarity">
    <text evidence="11">Belongs to the RNF12 family.</text>
</comment>
<gene>
    <name evidence="7 12" type="primary">RNF6</name>
    <name evidence="9" type="synonym">SPG2</name>
</gene>
<sequence length="685" mass="78091">MNQSRSRSDGGSEETLPQDHNHHENERRWQQERLHREEAYYQFINELNDEDYRLMRDHNLLGTPGEITSEELQQRLDGVKEQLASQPDLRDGTNYRDSEVPRESSHEDSLLEWLNTFRRTGNATRSGQNGNQTWRAVSRTNPNNGEFRFSLEIHVNHENRGFEIHGEDYTDIPLSDSNRDHTANRQQRSTSPVARRTRSQTSVNFNGSSSNIPRTRLASRGQNPAEGSFSTLGRLRNGIGGAAGIPRANASRTNFSSHTNQSGGSELRQREGQRFGAAHVWENGARSNVTVRNTNQRLEPIRLRSTSNSRSRSPIQRQSGTVYHNSQRESRPVQQTTRRSVRRRGRTRVFLEQDRERERRGTAYTPFSNSRLVSRITVEEGEESSRSSTAVRRHPTITLDLQVRRIRPGENRDRDSIANRTRSRVGLAENTVTIESNSGGFRRTISRLERSGIRTYVSTITVPLRRISENELVEPSSVALRSILRQIMTGFGELSSLMEADSESELQRNGQHLPDMHSELSNLGTDNNRSQHREGSSQDRQAQGDSTEMHGENETTQPHTRNSDSRGGRQLRNPNNLVETGTLPILRLAHFFLLNESDDDDRIRGLTKEQIDNLSTRHYEHNSIDSELGKICSVCISDYVTGNKLRQLPCMHEFHIHCIDRWLSENCTCPICRQPVLGSNIANNG</sequence>
<dbReference type="EC" id="2.3.2.27" evidence="6"/>
<dbReference type="EMBL" id="AJ010347">
    <property type="protein sequence ID" value="CAB40414.1"/>
    <property type="molecule type" value="mRNA"/>
</dbReference>
<dbReference type="EMBL" id="AJ010346">
    <property type="protein sequence ID" value="CAB40413.1"/>
    <property type="molecule type" value="mRNA"/>
</dbReference>
<dbReference type="EMBL" id="AF293342">
    <property type="protein sequence ID" value="AAK00848.1"/>
    <property type="molecule type" value="mRNA"/>
</dbReference>
<dbReference type="EMBL" id="AY009109">
    <property type="protein sequence ID" value="AAG49400.1"/>
    <property type="molecule type" value="mRNA"/>
</dbReference>
<dbReference type="EMBL" id="AK293272">
    <property type="protein sequence ID" value="BAG56801.1"/>
    <property type="molecule type" value="mRNA"/>
</dbReference>
<dbReference type="EMBL" id="AK312435">
    <property type="protein sequence ID" value="BAG35344.1"/>
    <property type="molecule type" value="mRNA"/>
</dbReference>
<dbReference type="EMBL" id="AL138966">
    <property type="status" value="NOT_ANNOTATED_CDS"/>
    <property type="molecule type" value="Genomic_DNA"/>
</dbReference>
<dbReference type="EMBL" id="CH471075">
    <property type="protein sequence ID" value="EAX08380.1"/>
    <property type="molecule type" value="Genomic_DNA"/>
</dbReference>
<dbReference type="EMBL" id="BC034688">
    <property type="protein sequence ID" value="AAH34688.1"/>
    <property type="molecule type" value="mRNA"/>
</dbReference>
<dbReference type="EMBL" id="AL133621">
    <property type="protein sequence ID" value="CAB63747.1"/>
    <property type="molecule type" value="mRNA"/>
</dbReference>
<dbReference type="CCDS" id="CCDS9316.1">
    <molecule id="Q9Y252-1"/>
</dbReference>
<dbReference type="PIR" id="T43459">
    <property type="entry name" value="T43459"/>
</dbReference>
<dbReference type="RefSeq" id="NP_005968.1">
    <molecule id="Q9Y252-1"/>
    <property type="nucleotide sequence ID" value="NM_005977.4"/>
</dbReference>
<dbReference type="RefSeq" id="NP_898864.1">
    <molecule id="Q9Y252-1"/>
    <property type="nucleotide sequence ID" value="NM_183043.3"/>
</dbReference>
<dbReference type="RefSeq" id="NP_898865.1">
    <molecule id="Q9Y252-1"/>
    <property type="nucleotide sequence ID" value="NM_183044.3"/>
</dbReference>
<dbReference type="RefSeq" id="NP_898866.1">
    <molecule id="Q9Y252-3"/>
    <property type="nucleotide sequence ID" value="NM_183045.1"/>
</dbReference>
<dbReference type="RefSeq" id="XP_005266542.1">
    <molecule id="Q9Y252-1"/>
    <property type="nucleotide sequence ID" value="XM_005266485.4"/>
</dbReference>
<dbReference type="RefSeq" id="XP_005266543.1">
    <molecule id="Q9Y252-1"/>
    <property type="nucleotide sequence ID" value="XM_005266486.3"/>
</dbReference>
<dbReference type="RefSeq" id="XP_011533479.1">
    <molecule id="Q9Y252-1"/>
    <property type="nucleotide sequence ID" value="XM_011535177.4"/>
</dbReference>
<dbReference type="RefSeq" id="XP_011533480.1">
    <molecule id="Q9Y252-3"/>
    <property type="nucleotide sequence ID" value="XM_011535178.3"/>
</dbReference>
<dbReference type="RefSeq" id="XP_024305158.1">
    <molecule id="Q9Y252-1"/>
    <property type="nucleotide sequence ID" value="XM_024449390.2"/>
</dbReference>
<dbReference type="RefSeq" id="XP_047286450.1">
    <molecule id="Q9Y252-2"/>
    <property type="nucleotide sequence ID" value="XM_047430494.1"/>
</dbReference>
<dbReference type="RefSeq" id="XP_047286454.1">
    <molecule id="Q9Y252-3"/>
    <property type="nucleotide sequence ID" value="XM_047430498.1"/>
</dbReference>
<dbReference type="RefSeq" id="XP_047286455.1">
    <molecule id="Q9Y252-3"/>
    <property type="nucleotide sequence ID" value="XM_047430499.1"/>
</dbReference>
<dbReference type="RefSeq" id="XP_047286456.1">
    <molecule id="Q9Y252-3"/>
    <property type="nucleotide sequence ID" value="XM_047430500.1"/>
</dbReference>
<dbReference type="RefSeq" id="XP_054230762.1">
    <molecule id="Q9Y252-1"/>
    <property type="nucleotide sequence ID" value="XM_054374787.1"/>
</dbReference>
<dbReference type="RefSeq" id="XP_054230763.1">
    <molecule id="Q9Y252-1"/>
    <property type="nucleotide sequence ID" value="XM_054374788.1"/>
</dbReference>
<dbReference type="RefSeq" id="XP_054230764.1">
    <molecule id="Q9Y252-1"/>
    <property type="nucleotide sequence ID" value="XM_054374789.1"/>
</dbReference>
<dbReference type="RefSeq" id="XP_054230765.1">
    <molecule id="Q9Y252-1"/>
    <property type="nucleotide sequence ID" value="XM_054374790.1"/>
</dbReference>
<dbReference type="RefSeq" id="XP_054230766.1">
    <molecule id="Q9Y252-2"/>
    <property type="nucleotide sequence ID" value="XM_054374791.1"/>
</dbReference>
<dbReference type="RefSeq" id="XP_054230774.1">
    <molecule id="Q9Y252-3"/>
    <property type="nucleotide sequence ID" value="XM_054374799.1"/>
</dbReference>
<dbReference type="RefSeq" id="XP_054230775.1">
    <molecule id="Q9Y252-3"/>
    <property type="nucleotide sequence ID" value="XM_054374800.1"/>
</dbReference>
<dbReference type="RefSeq" id="XP_054230776.1">
    <molecule id="Q9Y252-3"/>
    <property type="nucleotide sequence ID" value="XM_054374801.1"/>
</dbReference>
<dbReference type="RefSeq" id="XP_054230777.1">
    <molecule id="Q9Y252-3"/>
    <property type="nucleotide sequence ID" value="XM_054374802.1"/>
</dbReference>
<dbReference type="SMR" id="Q9Y252"/>
<dbReference type="BioGRID" id="111976">
    <property type="interactions" value="78"/>
</dbReference>
<dbReference type="FunCoup" id="Q9Y252">
    <property type="interactions" value="3491"/>
</dbReference>
<dbReference type="IntAct" id="Q9Y252">
    <property type="interactions" value="9"/>
</dbReference>
<dbReference type="STRING" id="9606.ENSP00000371000"/>
<dbReference type="GlyGen" id="Q9Y252">
    <property type="glycosylation" value="2 sites, 2 N-linked glycans (2 sites)"/>
</dbReference>
<dbReference type="iPTMnet" id="Q9Y252"/>
<dbReference type="PhosphoSitePlus" id="Q9Y252"/>
<dbReference type="BioMuta" id="RNF6"/>
<dbReference type="DMDM" id="13124536"/>
<dbReference type="jPOST" id="Q9Y252"/>
<dbReference type="MassIVE" id="Q9Y252"/>
<dbReference type="PaxDb" id="9606-ENSP00000371000"/>
<dbReference type="PeptideAtlas" id="Q9Y252"/>
<dbReference type="ProteomicsDB" id="85654">
    <molecule id="Q9Y252-1"/>
</dbReference>
<dbReference type="Pumba" id="Q9Y252"/>
<dbReference type="Antibodypedia" id="35204">
    <property type="antibodies" value="247 antibodies from 30 providers"/>
</dbReference>
<dbReference type="DNASU" id="6049"/>
<dbReference type="Ensembl" id="ENST00000346166.7">
    <molecule id="Q9Y252-1"/>
    <property type="protein sequence ID" value="ENSP00000342121.3"/>
    <property type="gene ID" value="ENSG00000127870.17"/>
</dbReference>
<dbReference type="Ensembl" id="ENST00000381570.7">
    <molecule id="Q9Y252-1"/>
    <property type="protein sequence ID" value="ENSP00000370982.3"/>
    <property type="gene ID" value="ENSG00000127870.17"/>
</dbReference>
<dbReference type="Ensembl" id="ENST00000381588.9">
    <molecule id="Q9Y252-1"/>
    <property type="protein sequence ID" value="ENSP00000371000.4"/>
    <property type="gene ID" value="ENSG00000127870.17"/>
</dbReference>
<dbReference type="GeneID" id="6049"/>
<dbReference type="KEGG" id="hsa:6049"/>
<dbReference type="MANE-Select" id="ENST00000381588.9">
    <property type="protein sequence ID" value="ENSP00000371000.4"/>
    <property type="RefSeq nucleotide sequence ID" value="NM_005977.4"/>
    <property type="RefSeq protein sequence ID" value="NP_005968.1"/>
</dbReference>
<dbReference type="UCSC" id="uc001uqo.4">
    <molecule id="Q9Y252-1"/>
    <property type="organism name" value="human"/>
</dbReference>
<dbReference type="AGR" id="HGNC:10069"/>
<dbReference type="CTD" id="6049"/>
<dbReference type="DisGeNET" id="6049"/>
<dbReference type="GeneCards" id="RNF6"/>
<dbReference type="HGNC" id="HGNC:10069">
    <property type="gene designation" value="RNF6"/>
</dbReference>
<dbReference type="HPA" id="ENSG00000127870">
    <property type="expression patterns" value="Low tissue specificity"/>
</dbReference>
<dbReference type="MalaCards" id="RNF6"/>
<dbReference type="MIM" id="133239">
    <property type="type" value="phenotype"/>
</dbReference>
<dbReference type="MIM" id="604242">
    <property type="type" value="gene"/>
</dbReference>
<dbReference type="neXtProt" id="NX_Q9Y252"/>
<dbReference type="OpenTargets" id="ENSG00000127870"/>
<dbReference type="Orphanet" id="99977">
    <property type="disease" value="Squamous cell carcinoma of the esophagus"/>
</dbReference>
<dbReference type="PharmGKB" id="PA34443"/>
<dbReference type="VEuPathDB" id="HostDB:ENSG00000127870"/>
<dbReference type="eggNOG" id="KOG0800">
    <property type="taxonomic scope" value="Eukaryota"/>
</dbReference>
<dbReference type="GeneTree" id="ENSGT00940000158530"/>
<dbReference type="HOGENOM" id="CLU_025933_0_0_1"/>
<dbReference type="InParanoid" id="Q9Y252"/>
<dbReference type="OMA" id="DISRDHT"/>
<dbReference type="OrthoDB" id="8062037at2759"/>
<dbReference type="PAN-GO" id="Q9Y252">
    <property type="GO annotations" value="6 GO annotations based on evolutionary models"/>
</dbReference>
<dbReference type="PhylomeDB" id="Q9Y252"/>
<dbReference type="TreeFam" id="TF325756"/>
<dbReference type="PathwayCommons" id="Q9Y252"/>
<dbReference type="Reactome" id="R-HSA-983168">
    <property type="pathway name" value="Antigen processing: Ubiquitination &amp; Proteasome degradation"/>
</dbReference>
<dbReference type="SignaLink" id="Q9Y252"/>
<dbReference type="SIGNOR" id="Q9Y252"/>
<dbReference type="UniPathway" id="UPA00143"/>
<dbReference type="BioGRID-ORCS" id="6049">
    <property type="hits" value="12 hits in 1198 CRISPR screens"/>
</dbReference>
<dbReference type="ChiTaRS" id="RNF6">
    <property type="organism name" value="human"/>
</dbReference>
<dbReference type="GenomeRNAi" id="6049"/>
<dbReference type="Pharos" id="Q9Y252">
    <property type="development level" value="Tbio"/>
</dbReference>
<dbReference type="PRO" id="PR:Q9Y252"/>
<dbReference type="Proteomes" id="UP000005640">
    <property type="component" value="Chromosome 13"/>
</dbReference>
<dbReference type="RNAct" id="Q9Y252">
    <property type="molecule type" value="protein"/>
</dbReference>
<dbReference type="Bgee" id="ENSG00000127870">
    <property type="expression patterns" value="Expressed in bronchial epithelial cell and 209 other cell types or tissues"/>
</dbReference>
<dbReference type="ExpressionAtlas" id="Q9Y252">
    <property type="expression patterns" value="baseline and differential"/>
</dbReference>
<dbReference type="GO" id="GO:0030424">
    <property type="term" value="C:axon"/>
    <property type="evidence" value="ECO:0000250"/>
    <property type="project" value="UniProtKB"/>
</dbReference>
<dbReference type="GO" id="GO:0005737">
    <property type="term" value="C:cytoplasm"/>
    <property type="evidence" value="ECO:0000314"/>
    <property type="project" value="UniProtKB"/>
</dbReference>
<dbReference type="GO" id="GO:0043231">
    <property type="term" value="C:intracellular membrane-bounded organelle"/>
    <property type="evidence" value="ECO:0000314"/>
    <property type="project" value="HPA"/>
</dbReference>
<dbReference type="GO" id="GO:0031965">
    <property type="term" value="C:nuclear membrane"/>
    <property type="evidence" value="ECO:0000314"/>
    <property type="project" value="HPA"/>
</dbReference>
<dbReference type="GO" id="GO:0005634">
    <property type="term" value="C:nucleus"/>
    <property type="evidence" value="ECO:0000314"/>
    <property type="project" value="UniProtKB"/>
</dbReference>
<dbReference type="GO" id="GO:0016605">
    <property type="term" value="C:PML body"/>
    <property type="evidence" value="ECO:0007669"/>
    <property type="project" value="UniProtKB-SubCell"/>
</dbReference>
<dbReference type="GO" id="GO:0003677">
    <property type="term" value="F:DNA binding"/>
    <property type="evidence" value="ECO:0007669"/>
    <property type="project" value="Ensembl"/>
</dbReference>
<dbReference type="GO" id="GO:0050681">
    <property type="term" value="F:nuclear androgen receptor binding"/>
    <property type="evidence" value="ECO:0000353"/>
    <property type="project" value="UniProtKB"/>
</dbReference>
<dbReference type="GO" id="GO:0061630">
    <property type="term" value="F:ubiquitin protein ligase activity"/>
    <property type="evidence" value="ECO:0000250"/>
    <property type="project" value="UniProtKB"/>
</dbReference>
<dbReference type="GO" id="GO:0004842">
    <property type="term" value="F:ubiquitin-protein transferase activity"/>
    <property type="evidence" value="ECO:0000315"/>
    <property type="project" value="UniProtKB"/>
</dbReference>
<dbReference type="GO" id="GO:0008270">
    <property type="term" value="F:zinc ion binding"/>
    <property type="evidence" value="ECO:0007669"/>
    <property type="project" value="UniProtKB-KW"/>
</dbReference>
<dbReference type="GO" id="GO:0048675">
    <property type="term" value="P:axon extension"/>
    <property type="evidence" value="ECO:0007669"/>
    <property type="project" value="Ensembl"/>
</dbReference>
<dbReference type="GO" id="GO:0030517">
    <property type="term" value="P:negative regulation of axon extension"/>
    <property type="evidence" value="ECO:0000250"/>
    <property type="project" value="UniProtKB"/>
</dbReference>
<dbReference type="GO" id="GO:0045893">
    <property type="term" value="P:positive regulation of DNA-templated transcription"/>
    <property type="evidence" value="ECO:0000315"/>
    <property type="project" value="UniProtKB"/>
</dbReference>
<dbReference type="GO" id="GO:0044314">
    <property type="term" value="P:protein K27-linked ubiquitination"/>
    <property type="evidence" value="ECO:0000314"/>
    <property type="project" value="UniProtKB"/>
</dbReference>
<dbReference type="GO" id="GO:0070936">
    <property type="term" value="P:protein K48-linked ubiquitination"/>
    <property type="evidence" value="ECO:0000250"/>
    <property type="project" value="UniProtKB"/>
</dbReference>
<dbReference type="GO" id="GO:0085020">
    <property type="term" value="P:protein K6-linked ubiquitination"/>
    <property type="evidence" value="ECO:0000314"/>
    <property type="project" value="UniProtKB"/>
</dbReference>
<dbReference type="GO" id="GO:0016567">
    <property type="term" value="P:protein ubiquitination"/>
    <property type="evidence" value="ECO:0000318"/>
    <property type="project" value="GO_Central"/>
</dbReference>
<dbReference type="GO" id="GO:0060765">
    <property type="term" value="P:regulation of androgen receptor signaling pathway"/>
    <property type="evidence" value="ECO:0000315"/>
    <property type="project" value="UniProtKB"/>
</dbReference>
<dbReference type="GO" id="GO:0006355">
    <property type="term" value="P:regulation of DNA-templated transcription"/>
    <property type="evidence" value="ECO:0000315"/>
    <property type="project" value="UniProtKB"/>
</dbReference>
<dbReference type="GO" id="GO:0006511">
    <property type="term" value="P:ubiquitin-dependent protein catabolic process"/>
    <property type="evidence" value="ECO:0000250"/>
    <property type="project" value="UniProtKB"/>
</dbReference>
<dbReference type="CDD" id="cd16673">
    <property type="entry name" value="RING-H2_RNF6"/>
    <property type="match status" value="1"/>
</dbReference>
<dbReference type="FunFam" id="3.30.40.10:FF:000054">
    <property type="entry name" value="E3 ubiquitin-protein ligase RLIM isoform X1"/>
    <property type="match status" value="1"/>
</dbReference>
<dbReference type="Gene3D" id="3.30.40.10">
    <property type="entry name" value="Zinc/RING finger domain, C3HC4 (zinc finger)"/>
    <property type="match status" value="1"/>
</dbReference>
<dbReference type="InterPro" id="IPR051834">
    <property type="entry name" value="RING_finger_E3_ligase"/>
</dbReference>
<dbReference type="InterPro" id="IPR001841">
    <property type="entry name" value="Znf_RING"/>
</dbReference>
<dbReference type="InterPro" id="IPR013083">
    <property type="entry name" value="Znf_RING/FYVE/PHD"/>
</dbReference>
<dbReference type="PANTHER" id="PTHR45931:SF2">
    <property type="entry name" value="E3 UBIQUITIN-PROTEIN LIGASE RNF6"/>
    <property type="match status" value="1"/>
</dbReference>
<dbReference type="PANTHER" id="PTHR45931">
    <property type="entry name" value="SI:CH211-59O9.10"/>
    <property type="match status" value="1"/>
</dbReference>
<dbReference type="Pfam" id="PF13639">
    <property type="entry name" value="zf-RING_2"/>
    <property type="match status" value="1"/>
</dbReference>
<dbReference type="SMART" id="SM00184">
    <property type="entry name" value="RING"/>
    <property type="match status" value="1"/>
</dbReference>
<dbReference type="SUPFAM" id="SSF57850">
    <property type="entry name" value="RING/U-box"/>
    <property type="match status" value="1"/>
</dbReference>
<dbReference type="PROSITE" id="PS50089">
    <property type="entry name" value="ZF_RING_2"/>
    <property type="match status" value="1"/>
</dbReference>
<organism>
    <name type="scientific">Homo sapiens</name>
    <name type="common">Human</name>
    <dbReference type="NCBI Taxonomy" id="9606"/>
    <lineage>
        <taxon>Eukaryota</taxon>
        <taxon>Metazoa</taxon>
        <taxon>Chordata</taxon>
        <taxon>Craniata</taxon>
        <taxon>Vertebrata</taxon>
        <taxon>Euteleostomi</taxon>
        <taxon>Mammalia</taxon>
        <taxon>Eutheria</taxon>
        <taxon>Euarchontoglires</taxon>
        <taxon>Primates</taxon>
        <taxon>Haplorrhini</taxon>
        <taxon>Catarrhini</taxon>
        <taxon>Hominidae</taxon>
        <taxon>Homo</taxon>
    </lineage>
</organism>
<feature type="chain" id="PRO_0000056047" description="E3 ubiquitin-protein ligase RNF6">
    <location>
        <begin position="1"/>
        <end position="685"/>
    </location>
</feature>
<feature type="zinc finger region" description="RING-type" evidence="2">
    <location>
        <begin position="632"/>
        <end position="673"/>
    </location>
</feature>
<feature type="region of interest" description="Disordered" evidence="3">
    <location>
        <begin position="1"/>
        <end position="29"/>
    </location>
</feature>
<feature type="region of interest" description="Disordered" evidence="3">
    <location>
        <begin position="81"/>
        <end position="107"/>
    </location>
</feature>
<feature type="region of interest" description="Disordered" evidence="3">
    <location>
        <begin position="121"/>
        <end position="142"/>
    </location>
</feature>
<feature type="region of interest" description="Disordered" evidence="3">
    <location>
        <begin position="168"/>
        <end position="273"/>
    </location>
</feature>
<feature type="region of interest" description="Disordered" evidence="3">
    <location>
        <begin position="286"/>
        <end position="345"/>
    </location>
</feature>
<feature type="region of interest" description="Disordered" evidence="3">
    <location>
        <begin position="499"/>
        <end position="576"/>
    </location>
</feature>
<feature type="compositionally biased region" description="Basic and acidic residues" evidence="3">
    <location>
        <begin position="1"/>
        <end position="10"/>
    </location>
</feature>
<feature type="compositionally biased region" description="Basic and acidic residues" evidence="3">
    <location>
        <begin position="17"/>
        <end position="29"/>
    </location>
</feature>
<feature type="compositionally biased region" description="Basic and acidic residues" evidence="3">
    <location>
        <begin position="88"/>
        <end position="107"/>
    </location>
</feature>
<feature type="compositionally biased region" description="Polar residues" evidence="3">
    <location>
        <begin position="199"/>
        <end position="213"/>
    </location>
</feature>
<feature type="compositionally biased region" description="Polar residues" evidence="3">
    <location>
        <begin position="250"/>
        <end position="264"/>
    </location>
</feature>
<feature type="compositionally biased region" description="Polar residues" evidence="3">
    <location>
        <begin position="286"/>
        <end position="297"/>
    </location>
</feature>
<feature type="compositionally biased region" description="Low complexity" evidence="3">
    <location>
        <begin position="303"/>
        <end position="313"/>
    </location>
</feature>
<feature type="compositionally biased region" description="Polar residues" evidence="3">
    <location>
        <begin position="314"/>
        <end position="325"/>
    </location>
</feature>
<feature type="compositionally biased region" description="Polar residues" evidence="3">
    <location>
        <begin position="519"/>
        <end position="528"/>
    </location>
</feature>
<feature type="splice variant" id="VSP_055424" description="In isoform 2." evidence="8">
    <original>MNQSRSRSDGGSEET</original>
    <variation>MQLEVDKMGTKLGEL</variation>
    <location>
        <begin position="1"/>
        <end position="15"/>
    </location>
</feature>
<feature type="splice variant" id="VSP_055425" description="In isoform 2." evidence="8">
    <location>
        <begin position="16"/>
        <end position="371"/>
    </location>
</feature>
<feature type="splice variant" id="VSP_055426" description="In isoform 3." evidence="10">
    <original>VSRTNP</original>
    <variation>ALPDTS</variation>
    <location>
        <begin position="137"/>
        <end position="142"/>
    </location>
</feature>
<feature type="splice variant" id="VSP_055427" description="In isoform 3." evidence="10">
    <location>
        <begin position="143"/>
        <end position="685"/>
    </location>
</feature>
<feature type="sequence variant" id="VAR_034465" description="In dbSNP:rs3910433." evidence="4">
    <original>N</original>
    <variation>S</variation>
    <location>
        <position position="48"/>
    </location>
</feature>
<feature type="sequence variant" id="VAR_063490" description="Found in an esophageal cancer sample; esophageal squamous cell carcinoma; somatic mutation; dbSNP:rs121434522." evidence="4">
    <original>R</original>
    <variation>K</variation>
    <location>
        <position position="102"/>
    </location>
</feature>
<feature type="sequence variant" id="VAR_063491" description="In dbSNP:rs61760897." evidence="4">
    <original>I</original>
    <variation>T</variation>
    <location>
        <position position="164"/>
    </location>
</feature>
<feature type="sequence variant" id="VAR_052094" description="In dbSNP:rs7990167.">
    <original>V</original>
    <variation>E</variation>
    <location>
        <position position="203"/>
    </location>
</feature>
<feature type="sequence variant" id="VAR_063492" description="Found in an esophageal cancer sample; esophageal squamous cell carcinoma; somatic mutation; dbSNP:rs121434523." evidence="4">
    <original>A</original>
    <variation>T</variation>
    <location>
        <position position="242"/>
    </location>
</feature>
<feature type="sequence variant" id="VAR_063493" description="Found in an esophageal cancer sample; esophageal squamous cell carcinoma; somatic mutation; dbSNP:rs121434524." evidence="4">
    <original>G</original>
    <variation>D</variation>
    <location>
        <position position="244"/>
    </location>
</feature>
<feature type="sequence variant" id="VAR_063494" description="In dbSNP:rs138379662." evidence="4">
    <original>R</original>
    <variation>Q</variation>
    <location>
        <position position="572"/>
    </location>
</feature>
<feature type="sequence variant" id="VAR_052095" description="In dbSNP:rs17083436." evidence="4">
    <original>S</original>
    <variation>N</variation>
    <location>
        <position position="623"/>
    </location>
</feature>
<keyword id="KW-0025">Alternative splicing</keyword>
<keyword id="KW-0966">Cell projection</keyword>
<keyword id="KW-0963">Cytoplasm</keyword>
<keyword id="KW-0479">Metal-binding</keyword>
<keyword id="KW-0539">Nucleus</keyword>
<keyword id="KW-1267">Proteomics identification</keyword>
<keyword id="KW-1185">Reference proteome</keyword>
<keyword id="KW-0808">Transferase</keyword>
<keyword id="KW-0833">Ubl conjugation pathway</keyword>
<keyword id="KW-0862">Zinc</keyword>
<keyword id="KW-0863">Zinc-finger</keyword>
<accession>Q9Y252</accession>
<accession>B4DDP0</accession>
<accession>Q5W0H0</accession>
<accession>Q9BZP5</accession>
<accession>Q9UF41</accession>
<name>RNF6_HUMAN</name>
<evidence type="ECO:0000250" key="1">
    <source>
        <dbReference type="UniProtKB" id="Q9DBU5"/>
    </source>
</evidence>
<evidence type="ECO:0000255" key="2">
    <source>
        <dbReference type="PROSITE-ProRule" id="PRU00175"/>
    </source>
</evidence>
<evidence type="ECO:0000256" key="3">
    <source>
        <dbReference type="SAM" id="MobiDB-lite"/>
    </source>
</evidence>
<evidence type="ECO:0000269" key="4">
    <source>
    </source>
</evidence>
<evidence type="ECO:0000269" key="5">
    <source>
    </source>
</evidence>
<evidence type="ECO:0000269" key="6">
    <source>
    </source>
</evidence>
<evidence type="ECO:0000303" key="7">
    <source>
    </source>
</evidence>
<evidence type="ECO:0000303" key="8">
    <source>
    </source>
</evidence>
<evidence type="ECO:0000303" key="9">
    <source>
    </source>
</evidence>
<evidence type="ECO:0000303" key="10">
    <source ref="2"/>
</evidence>
<evidence type="ECO:0000305" key="11"/>
<evidence type="ECO:0000312" key="12">
    <source>
        <dbReference type="HGNC" id="HGNC:10069"/>
    </source>
</evidence>
<proteinExistence type="evidence at protein level"/>